<comment type="subunit">
    <text evidence="1">Part of the 50S ribosomal subunit.</text>
</comment>
<comment type="similarity">
    <text evidence="1">Belongs to the bacterial ribosomal protein bL31 family. Type B subfamily.</text>
</comment>
<protein>
    <recommendedName>
        <fullName evidence="1">Large ribosomal subunit protein bL31B</fullName>
    </recommendedName>
    <alternativeName>
        <fullName evidence="2">50S ribosomal protein L31 type B</fullName>
    </alternativeName>
</protein>
<accession>C3P293</accession>
<feature type="chain" id="PRO_1000176980" description="Large ribosomal subunit protein bL31B">
    <location>
        <begin position="1"/>
        <end position="81"/>
    </location>
</feature>
<evidence type="ECO:0000255" key="1">
    <source>
        <dbReference type="HAMAP-Rule" id="MF_00502"/>
    </source>
</evidence>
<evidence type="ECO:0000305" key="2"/>
<reference key="1">
    <citation type="submission" date="2009-04" db="EMBL/GenBank/DDBJ databases">
        <title>Genome sequence of Bacillus anthracis A0248.</title>
        <authorList>
            <person name="Dodson R.J."/>
            <person name="Munk A.C."/>
            <person name="Bruce D."/>
            <person name="Detter C."/>
            <person name="Tapia R."/>
            <person name="Sutton G."/>
            <person name="Sims D."/>
            <person name="Brettin T."/>
        </authorList>
    </citation>
    <scope>NUCLEOTIDE SEQUENCE [LARGE SCALE GENOMIC DNA]</scope>
    <source>
        <strain>A0248</strain>
    </source>
</reference>
<organism>
    <name type="scientific">Bacillus anthracis (strain A0248)</name>
    <dbReference type="NCBI Taxonomy" id="592021"/>
    <lineage>
        <taxon>Bacteria</taxon>
        <taxon>Bacillati</taxon>
        <taxon>Bacillota</taxon>
        <taxon>Bacilli</taxon>
        <taxon>Bacillales</taxon>
        <taxon>Bacillaceae</taxon>
        <taxon>Bacillus</taxon>
        <taxon>Bacillus cereus group</taxon>
    </lineage>
</organism>
<proteinExistence type="inferred from homology"/>
<name>RL31B_BACAA</name>
<sequence>MKAGIHPDYKKVVFMDTNTGFKFLSGSTKGSNETVEWEDGNTYPLLKVEISSDSHPFYTGRQKFATADGRVDRFNKKYGLK</sequence>
<gene>
    <name evidence="1" type="primary">rpmE2</name>
    <name type="ordered locus">BAA_5601</name>
</gene>
<dbReference type="EMBL" id="CP001598">
    <property type="protein sequence ID" value="ACQ45937.1"/>
    <property type="molecule type" value="Genomic_DNA"/>
</dbReference>
<dbReference type="RefSeq" id="WP_000643433.1">
    <property type="nucleotide sequence ID" value="NC_012659.1"/>
</dbReference>
<dbReference type="SMR" id="C3P293"/>
<dbReference type="KEGG" id="bai:BAA_5601"/>
<dbReference type="HOGENOM" id="CLU_114306_2_2_9"/>
<dbReference type="GO" id="GO:1990904">
    <property type="term" value="C:ribonucleoprotein complex"/>
    <property type="evidence" value="ECO:0007669"/>
    <property type="project" value="UniProtKB-KW"/>
</dbReference>
<dbReference type="GO" id="GO:0005840">
    <property type="term" value="C:ribosome"/>
    <property type="evidence" value="ECO:0007669"/>
    <property type="project" value="UniProtKB-KW"/>
</dbReference>
<dbReference type="GO" id="GO:0003735">
    <property type="term" value="F:structural constituent of ribosome"/>
    <property type="evidence" value="ECO:0007669"/>
    <property type="project" value="InterPro"/>
</dbReference>
<dbReference type="GO" id="GO:0006412">
    <property type="term" value="P:translation"/>
    <property type="evidence" value="ECO:0007669"/>
    <property type="project" value="UniProtKB-UniRule"/>
</dbReference>
<dbReference type="Gene3D" id="4.10.830.30">
    <property type="entry name" value="Ribosomal protein L31"/>
    <property type="match status" value="1"/>
</dbReference>
<dbReference type="HAMAP" id="MF_00502">
    <property type="entry name" value="Ribosomal_bL31_2"/>
    <property type="match status" value="1"/>
</dbReference>
<dbReference type="InterPro" id="IPR034704">
    <property type="entry name" value="Ribosomal_bL28/bL31-like_sf"/>
</dbReference>
<dbReference type="InterPro" id="IPR002150">
    <property type="entry name" value="Ribosomal_bL31"/>
</dbReference>
<dbReference type="InterPro" id="IPR027493">
    <property type="entry name" value="Ribosomal_bL31_B"/>
</dbReference>
<dbReference type="InterPro" id="IPR042105">
    <property type="entry name" value="Ribosomal_bL31_sf"/>
</dbReference>
<dbReference type="NCBIfam" id="TIGR00105">
    <property type="entry name" value="L31"/>
    <property type="match status" value="1"/>
</dbReference>
<dbReference type="NCBIfam" id="NF002462">
    <property type="entry name" value="PRK01678.1"/>
    <property type="match status" value="1"/>
</dbReference>
<dbReference type="PANTHER" id="PTHR33280">
    <property type="entry name" value="50S RIBOSOMAL PROTEIN L31, CHLOROPLASTIC"/>
    <property type="match status" value="1"/>
</dbReference>
<dbReference type="PANTHER" id="PTHR33280:SF1">
    <property type="entry name" value="LARGE RIBOSOMAL SUBUNIT PROTEIN BL31C"/>
    <property type="match status" value="1"/>
</dbReference>
<dbReference type="Pfam" id="PF01197">
    <property type="entry name" value="Ribosomal_L31"/>
    <property type="match status" value="1"/>
</dbReference>
<dbReference type="PRINTS" id="PR01249">
    <property type="entry name" value="RIBOSOMALL31"/>
</dbReference>
<dbReference type="SUPFAM" id="SSF143800">
    <property type="entry name" value="L28p-like"/>
    <property type="match status" value="1"/>
</dbReference>
<dbReference type="PROSITE" id="PS01143">
    <property type="entry name" value="RIBOSOMAL_L31"/>
    <property type="match status" value="1"/>
</dbReference>
<keyword id="KW-0687">Ribonucleoprotein</keyword>
<keyword id="KW-0689">Ribosomal protein</keyword>